<name>DEOC_GLOVI</name>
<feature type="chain" id="PRO_0000057233" description="Deoxyribose-phosphate aldolase">
    <location>
        <begin position="1"/>
        <end position="226"/>
    </location>
</feature>
<feature type="active site" description="Proton donor/acceptor" evidence="1">
    <location>
        <position position="96"/>
    </location>
</feature>
<feature type="active site" description="Schiff-base intermediate with acetaldehyde" evidence="1">
    <location>
        <position position="157"/>
    </location>
</feature>
<feature type="active site" description="Proton donor/acceptor" evidence="1">
    <location>
        <position position="185"/>
    </location>
</feature>
<comment type="function">
    <text evidence="1">Catalyzes a reversible aldol reaction between acetaldehyde and D-glyceraldehyde 3-phosphate to generate 2-deoxy-D-ribose 5-phosphate.</text>
</comment>
<comment type="catalytic activity">
    <reaction evidence="1">
        <text>2-deoxy-D-ribose 5-phosphate = D-glyceraldehyde 3-phosphate + acetaldehyde</text>
        <dbReference type="Rhea" id="RHEA:12821"/>
        <dbReference type="ChEBI" id="CHEBI:15343"/>
        <dbReference type="ChEBI" id="CHEBI:59776"/>
        <dbReference type="ChEBI" id="CHEBI:62877"/>
        <dbReference type="EC" id="4.1.2.4"/>
    </reaction>
</comment>
<comment type="pathway">
    <text evidence="1">Carbohydrate degradation; 2-deoxy-D-ribose 1-phosphate degradation; D-glyceraldehyde 3-phosphate and acetaldehyde from 2-deoxy-alpha-D-ribose 1-phosphate: step 2/2.</text>
</comment>
<comment type="subcellular location">
    <subcellularLocation>
        <location evidence="1">Cytoplasm</location>
    </subcellularLocation>
</comment>
<comment type="similarity">
    <text evidence="1">Belongs to the DeoC/FbaB aldolase family. DeoC type 1 subfamily.</text>
</comment>
<reference key="1">
    <citation type="journal article" date="2003" name="DNA Res.">
        <title>Complete genome structure of Gloeobacter violaceus PCC 7421, a cyanobacterium that lacks thylakoids.</title>
        <authorList>
            <person name="Nakamura Y."/>
            <person name="Kaneko T."/>
            <person name="Sato S."/>
            <person name="Mimuro M."/>
            <person name="Miyashita H."/>
            <person name="Tsuchiya T."/>
            <person name="Sasamoto S."/>
            <person name="Watanabe A."/>
            <person name="Kawashima K."/>
            <person name="Kishida Y."/>
            <person name="Kiyokawa C."/>
            <person name="Kohara M."/>
            <person name="Matsumoto M."/>
            <person name="Matsuno A."/>
            <person name="Nakazaki N."/>
            <person name="Shimpo S."/>
            <person name="Takeuchi C."/>
            <person name="Yamada M."/>
            <person name="Tabata S."/>
        </authorList>
    </citation>
    <scope>NUCLEOTIDE SEQUENCE [LARGE SCALE GENOMIC DNA]</scope>
    <source>
        <strain>ATCC 29082 / PCC 7421</strain>
    </source>
</reference>
<protein>
    <recommendedName>
        <fullName evidence="1">Deoxyribose-phosphate aldolase</fullName>
        <shortName evidence="1">DERA</shortName>
        <ecNumber evidence="1">4.1.2.4</ecNumber>
    </recommendedName>
    <alternativeName>
        <fullName evidence="1">2-deoxy-D-ribose 5-phosphate aldolase</fullName>
    </alternativeName>
    <alternativeName>
        <fullName evidence="1">Phosphodeoxyriboaldolase</fullName>
        <shortName evidence="1">Deoxyriboaldolase</shortName>
    </alternativeName>
</protein>
<keyword id="KW-0963">Cytoplasm</keyword>
<keyword id="KW-0456">Lyase</keyword>
<keyword id="KW-1185">Reference proteome</keyword>
<keyword id="KW-0704">Schiff base</keyword>
<gene>
    <name evidence="1" type="primary">deoC</name>
    <name type="ordered locus">gll3538</name>
</gene>
<organism>
    <name type="scientific">Gloeobacter violaceus (strain ATCC 29082 / PCC 7421)</name>
    <dbReference type="NCBI Taxonomy" id="251221"/>
    <lineage>
        <taxon>Bacteria</taxon>
        <taxon>Bacillati</taxon>
        <taxon>Cyanobacteriota</taxon>
        <taxon>Cyanophyceae</taxon>
        <taxon>Gloeobacterales</taxon>
        <taxon>Gloeobacteraceae</taxon>
        <taxon>Gloeobacter</taxon>
    </lineage>
</organism>
<sequence length="226" mass="24268">MISSHPEIELAGFIEQTCLKPTATADDVRQMCWEAQRYRFAAVCVAPVYAPLAVELLHKQKPQVFTVVGFPLGLATAPCKLFEAQEAAARGVTGLEVMVNLGAIKSGHYNAIYEELGQIVDAVGCEVRAILELNLLDATERRHVAEVCLDVGVTALKTSAGWSGPVRPEDILGLRRILRNQLGIKVAGGIHTLNQALELLAAGANRLGTGRGVEILREQHALGKTA</sequence>
<accession>Q7NFI7</accession>
<proteinExistence type="inferred from homology"/>
<evidence type="ECO:0000255" key="1">
    <source>
        <dbReference type="HAMAP-Rule" id="MF_00114"/>
    </source>
</evidence>
<dbReference type="EC" id="4.1.2.4" evidence="1"/>
<dbReference type="EMBL" id="BA000045">
    <property type="protein sequence ID" value="BAC91479.1"/>
    <property type="molecule type" value="Genomic_DNA"/>
</dbReference>
<dbReference type="RefSeq" id="NP_926484.1">
    <property type="nucleotide sequence ID" value="NC_005125.1"/>
</dbReference>
<dbReference type="RefSeq" id="WP_011143527.1">
    <property type="nucleotide sequence ID" value="NC_005125.1"/>
</dbReference>
<dbReference type="SMR" id="Q7NFI7"/>
<dbReference type="FunCoup" id="Q7NFI7">
    <property type="interactions" value="242"/>
</dbReference>
<dbReference type="STRING" id="251221.gene:10761051"/>
<dbReference type="EnsemblBacteria" id="BAC91479">
    <property type="protein sequence ID" value="BAC91479"/>
    <property type="gene ID" value="BAC91479"/>
</dbReference>
<dbReference type="KEGG" id="gvi:gll3538"/>
<dbReference type="eggNOG" id="COG0274">
    <property type="taxonomic scope" value="Bacteria"/>
</dbReference>
<dbReference type="HOGENOM" id="CLU_053595_0_1_3"/>
<dbReference type="InParanoid" id="Q7NFI7"/>
<dbReference type="OrthoDB" id="9778711at2"/>
<dbReference type="PhylomeDB" id="Q7NFI7"/>
<dbReference type="UniPathway" id="UPA00002">
    <property type="reaction ID" value="UER00468"/>
</dbReference>
<dbReference type="Proteomes" id="UP000000557">
    <property type="component" value="Chromosome"/>
</dbReference>
<dbReference type="GO" id="GO:0005737">
    <property type="term" value="C:cytoplasm"/>
    <property type="evidence" value="ECO:0007669"/>
    <property type="project" value="UniProtKB-SubCell"/>
</dbReference>
<dbReference type="GO" id="GO:0004139">
    <property type="term" value="F:deoxyribose-phosphate aldolase activity"/>
    <property type="evidence" value="ECO:0000318"/>
    <property type="project" value="GO_Central"/>
</dbReference>
<dbReference type="GO" id="GO:0006018">
    <property type="term" value="P:2-deoxyribose 1-phosphate catabolic process"/>
    <property type="evidence" value="ECO:0007669"/>
    <property type="project" value="UniProtKB-UniRule"/>
</dbReference>
<dbReference type="GO" id="GO:0016052">
    <property type="term" value="P:carbohydrate catabolic process"/>
    <property type="evidence" value="ECO:0000318"/>
    <property type="project" value="GO_Central"/>
</dbReference>
<dbReference type="GO" id="GO:0009264">
    <property type="term" value="P:deoxyribonucleotide catabolic process"/>
    <property type="evidence" value="ECO:0000318"/>
    <property type="project" value="GO_Central"/>
</dbReference>
<dbReference type="CDD" id="cd00959">
    <property type="entry name" value="DeoC"/>
    <property type="match status" value="1"/>
</dbReference>
<dbReference type="FunFam" id="3.20.20.70:FF:000044">
    <property type="entry name" value="Deoxyribose-phosphate aldolase"/>
    <property type="match status" value="1"/>
</dbReference>
<dbReference type="Gene3D" id="3.20.20.70">
    <property type="entry name" value="Aldolase class I"/>
    <property type="match status" value="1"/>
</dbReference>
<dbReference type="HAMAP" id="MF_00114">
    <property type="entry name" value="DeoC_type1"/>
    <property type="match status" value="1"/>
</dbReference>
<dbReference type="InterPro" id="IPR013785">
    <property type="entry name" value="Aldolase_TIM"/>
</dbReference>
<dbReference type="InterPro" id="IPR011343">
    <property type="entry name" value="DeoC"/>
</dbReference>
<dbReference type="InterPro" id="IPR002915">
    <property type="entry name" value="DeoC/FbaB/LacD_aldolase"/>
</dbReference>
<dbReference type="InterPro" id="IPR028581">
    <property type="entry name" value="DeoC_typeI"/>
</dbReference>
<dbReference type="NCBIfam" id="TIGR00126">
    <property type="entry name" value="deoC"/>
    <property type="match status" value="1"/>
</dbReference>
<dbReference type="PANTHER" id="PTHR10889">
    <property type="entry name" value="DEOXYRIBOSE-PHOSPHATE ALDOLASE"/>
    <property type="match status" value="1"/>
</dbReference>
<dbReference type="PANTHER" id="PTHR10889:SF1">
    <property type="entry name" value="DEOXYRIBOSE-PHOSPHATE ALDOLASE"/>
    <property type="match status" value="1"/>
</dbReference>
<dbReference type="PIRSF" id="PIRSF001357">
    <property type="entry name" value="DeoC"/>
    <property type="match status" value="1"/>
</dbReference>
<dbReference type="SMART" id="SM01133">
    <property type="entry name" value="DeoC"/>
    <property type="match status" value="1"/>
</dbReference>
<dbReference type="SUPFAM" id="SSF51569">
    <property type="entry name" value="Aldolase"/>
    <property type="match status" value="1"/>
</dbReference>